<evidence type="ECO:0000255" key="1">
    <source>
        <dbReference type="HAMAP-Rule" id="MF_00412"/>
    </source>
</evidence>
<name>PROA_MYCSJ</name>
<sequence length="415" mass="43482">MSVHAPAAPDLRTEVHDAARRARVASRTLATLSTETKNRALRAAADRVLMDAHLIIAGNERDLEKARAAGTPDAMLDRLALNPQRIDGVAAGLRQVASLPDPVGEVLRGNTLVNGLQLRQQRVPLGVVGIVYEGRPNVTVDAFGLTLKSGNAVLLRGSSSAAHSNAALVDSLRAALVAEGLDANAVQLLPSHDRASVTHLIQARGLVDVVIPRGGAGLIDAVVRDAQVPTIETGVGNCHVYVHSAADLDMAETILLNAKTRRPSVCNAAESVLIDAAIAEEAVPRLTKALQDAGVTVHADPTEEELRAEFLSMDIALAVVDGVDAAIAHVNEYGSGHTEAIVTADLAAAQRFTERVDAAAVMVNASTAFTDGEQFGFGAEIGISTQKLHARGPMGLPELTSTKWIVWGDGHTRPA</sequence>
<organism>
    <name type="scientific">Mycobacterium sp. (strain JLS)</name>
    <dbReference type="NCBI Taxonomy" id="164757"/>
    <lineage>
        <taxon>Bacteria</taxon>
        <taxon>Bacillati</taxon>
        <taxon>Actinomycetota</taxon>
        <taxon>Actinomycetes</taxon>
        <taxon>Mycobacteriales</taxon>
        <taxon>Mycobacteriaceae</taxon>
        <taxon>Mycobacterium</taxon>
    </lineage>
</organism>
<dbReference type="EC" id="1.2.1.41" evidence="1"/>
<dbReference type="EMBL" id="CP000580">
    <property type="protein sequence ID" value="ABN99320.1"/>
    <property type="molecule type" value="Genomic_DNA"/>
</dbReference>
<dbReference type="SMR" id="A3Q2E3"/>
<dbReference type="KEGG" id="mjl:Mjls_3543"/>
<dbReference type="HOGENOM" id="CLU_030231_0_0_11"/>
<dbReference type="BioCyc" id="MSP164757:G1G8C-3573-MONOMER"/>
<dbReference type="UniPathway" id="UPA00098">
    <property type="reaction ID" value="UER00360"/>
</dbReference>
<dbReference type="GO" id="GO:0005737">
    <property type="term" value="C:cytoplasm"/>
    <property type="evidence" value="ECO:0007669"/>
    <property type="project" value="UniProtKB-SubCell"/>
</dbReference>
<dbReference type="GO" id="GO:0004350">
    <property type="term" value="F:glutamate-5-semialdehyde dehydrogenase activity"/>
    <property type="evidence" value="ECO:0007669"/>
    <property type="project" value="UniProtKB-UniRule"/>
</dbReference>
<dbReference type="GO" id="GO:0050661">
    <property type="term" value="F:NADP binding"/>
    <property type="evidence" value="ECO:0007669"/>
    <property type="project" value="InterPro"/>
</dbReference>
<dbReference type="GO" id="GO:0055129">
    <property type="term" value="P:L-proline biosynthetic process"/>
    <property type="evidence" value="ECO:0007669"/>
    <property type="project" value="UniProtKB-UniRule"/>
</dbReference>
<dbReference type="CDD" id="cd07079">
    <property type="entry name" value="ALDH_F18-19_ProA-GPR"/>
    <property type="match status" value="1"/>
</dbReference>
<dbReference type="Gene3D" id="3.40.605.10">
    <property type="entry name" value="Aldehyde Dehydrogenase, Chain A, domain 1"/>
    <property type="match status" value="1"/>
</dbReference>
<dbReference type="Gene3D" id="3.40.309.10">
    <property type="entry name" value="Aldehyde Dehydrogenase, Chain A, domain 2"/>
    <property type="match status" value="1"/>
</dbReference>
<dbReference type="HAMAP" id="MF_00412">
    <property type="entry name" value="ProA"/>
    <property type="match status" value="1"/>
</dbReference>
<dbReference type="InterPro" id="IPR016161">
    <property type="entry name" value="Ald_DH/histidinol_DH"/>
</dbReference>
<dbReference type="InterPro" id="IPR016163">
    <property type="entry name" value="Ald_DH_C"/>
</dbReference>
<dbReference type="InterPro" id="IPR016162">
    <property type="entry name" value="Ald_DH_N"/>
</dbReference>
<dbReference type="InterPro" id="IPR015590">
    <property type="entry name" value="Aldehyde_DH_dom"/>
</dbReference>
<dbReference type="InterPro" id="IPR012134">
    <property type="entry name" value="Glu-5-SA_DH"/>
</dbReference>
<dbReference type="InterPro" id="IPR000965">
    <property type="entry name" value="GPR_dom"/>
</dbReference>
<dbReference type="NCBIfam" id="NF001221">
    <property type="entry name" value="PRK00197.1"/>
    <property type="match status" value="1"/>
</dbReference>
<dbReference type="NCBIfam" id="TIGR00407">
    <property type="entry name" value="proA"/>
    <property type="match status" value="1"/>
</dbReference>
<dbReference type="PANTHER" id="PTHR11063:SF8">
    <property type="entry name" value="DELTA-1-PYRROLINE-5-CARBOXYLATE SYNTHASE"/>
    <property type="match status" value="1"/>
</dbReference>
<dbReference type="PANTHER" id="PTHR11063">
    <property type="entry name" value="GLUTAMATE SEMIALDEHYDE DEHYDROGENASE"/>
    <property type="match status" value="1"/>
</dbReference>
<dbReference type="Pfam" id="PF00171">
    <property type="entry name" value="Aldedh"/>
    <property type="match status" value="2"/>
</dbReference>
<dbReference type="PIRSF" id="PIRSF000151">
    <property type="entry name" value="GPR"/>
    <property type="match status" value="1"/>
</dbReference>
<dbReference type="SUPFAM" id="SSF53720">
    <property type="entry name" value="ALDH-like"/>
    <property type="match status" value="1"/>
</dbReference>
<accession>A3Q2E3</accession>
<proteinExistence type="inferred from homology"/>
<feature type="chain" id="PRO_1000049965" description="Gamma-glutamyl phosphate reductase">
    <location>
        <begin position="1"/>
        <end position="415"/>
    </location>
</feature>
<keyword id="KW-0028">Amino-acid biosynthesis</keyword>
<keyword id="KW-0963">Cytoplasm</keyword>
<keyword id="KW-0521">NADP</keyword>
<keyword id="KW-0560">Oxidoreductase</keyword>
<keyword id="KW-0641">Proline biosynthesis</keyword>
<reference key="1">
    <citation type="submission" date="2007-02" db="EMBL/GenBank/DDBJ databases">
        <title>Complete sequence of Mycobacterium sp. JLS.</title>
        <authorList>
            <consortium name="US DOE Joint Genome Institute"/>
            <person name="Copeland A."/>
            <person name="Lucas S."/>
            <person name="Lapidus A."/>
            <person name="Barry K."/>
            <person name="Detter J.C."/>
            <person name="Glavina del Rio T."/>
            <person name="Hammon N."/>
            <person name="Israni S."/>
            <person name="Dalin E."/>
            <person name="Tice H."/>
            <person name="Pitluck S."/>
            <person name="Chain P."/>
            <person name="Malfatti S."/>
            <person name="Shin M."/>
            <person name="Vergez L."/>
            <person name="Schmutz J."/>
            <person name="Larimer F."/>
            <person name="Land M."/>
            <person name="Hauser L."/>
            <person name="Kyrpides N."/>
            <person name="Mikhailova N."/>
            <person name="Miller C.D."/>
            <person name="Anderson A.J."/>
            <person name="Sims R.C."/>
            <person name="Richardson P."/>
        </authorList>
    </citation>
    <scope>NUCLEOTIDE SEQUENCE [LARGE SCALE GENOMIC DNA]</scope>
    <source>
        <strain>JLS</strain>
    </source>
</reference>
<gene>
    <name evidence="1" type="primary">proA</name>
    <name type="ordered locus">Mjls_3543</name>
</gene>
<comment type="function">
    <text evidence="1">Catalyzes the NADPH-dependent reduction of L-glutamate 5-phosphate into L-glutamate 5-semialdehyde and phosphate. The product spontaneously undergoes cyclization to form 1-pyrroline-5-carboxylate.</text>
</comment>
<comment type="catalytic activity">
    <reaction evidence="1">
        <text>L-glutamate 5-semialdehyde + phosphate + NADP(+) = L-glutamyl 5-phosphate + NADPH + H(+)</text>
        <dbReference type="Rhea" id="RHEA:19541"/>
        <dbReference type="ChEBI" id="CHEBI:15378"/>
        <dbReference type="ChEBI" id="CHEBI:43474"/>
        <dbReference type="ChEBI" id="CHEBI:57783"/>
        <dbReference type="ChEBI" id="CHEBI:58066"/>
        <dbReference type="ChEBI" id="CHEBI:58274"/>
        <dbReference type="ChEBI" id="CHEBI:58349"/>
        <dbReference type="EC" id="1.2.1.41"/>
    </reaction>
</comment>
<comment type="pathway">
    <text evidence="1">Amino-acid biosynthesis; L-proline biosynthesis; L-glutamate 5-semialdehyde from L-glutamate: step 2/2.</text>
</comment>
<comment type="subcellular location">
    <subcellularLocation>
        <location evidence="1">Cytoplasm</location>
    </subcellularLocation>
</comment>
<comment type="similarity">
    <text evidence="1">Belongs to the gamma-glutamyl phosphate reductase family.</text>
</comment>
<protein>
    <recommendedName>
        <fullName evidence="1">Gamma-glutamyl phosphate reductase</fullName>
        <shortName evidence="1">GPR</shortName>
        <ecNumber evidence="1">1.2.1.41</ecNumber>
    </recommendedName>
    <alternativeName>
        <fullName evidence="1">Glutamate-5-semialdehyde dehydrogenase</fullName>
    </alternativeName>
    <alternativeName>
        <fullName evidence="1">Glutamyl-gamma-semialdehyde dehydrogenase</fullName>
        <shortName evidence="1">GSA dehydrogenase</shortName>
    </alternativeName>
</protein>